<reference key="1">
    <citation type="journal article" date="1987" name="Proc. Natl. Acad. Sci. U.S.A.">
        <title>Conservation of ferritin heavy subunit gene structure: implications for the regulation of ferritin gene expression.</title>
        <authorList>
            <person name="Murray M.T."/>
            <person name="White K."/>
            <person name="Munro H.N."/>
        </authorList>
    </citation>
    <scope>NUCLEOTIDE SEQUENCE [GENOMIC DNA]</scope>
</reference>
<reference key="2">
    <citation type="submission" date="1996-07" db="EMBL/GenBank/DDBJ databases">
        <authorList>
            <person name="Wu C.G."/>
            <person name="Groenink M."/>
            <person name="Bosma A."/>
            <person name="Reitsma P.H."/>
            <person name="van Deventer J.H."/>
            <person name="Chamuleau R.A.F.M."/>
        </authorList>
    </citation>
    <scope>NUCLEOTIDE SEQUENCE [MRNA]</scope>
    <source>
        <strain>Wistar</strain>
        <tissue>Liver</tissue>
    </source>
</reference>
<reference key="3">
    <citation type="submission" date="2007-07" db="UniProtKB">
        <authorList>
            <person name="Lubec G."/>
            <person name="Kang S.U."/>
        </authorList>
    </citation>
    <scope>PROTEIN SEQUENCE OF 81-87</scope>
    <scope>IDENTIFICATION BY MASS SPECTROMETRY</scope>
    <source>
        <strain>Sprague-Dawley</strain>
        <tissue>Brain</tissue>
    </source>
</reference>
<reference key="4">
    <citation type="journal article" date="1988" name="Biochem. Biophys. Res. Commun.">
        <title>TSH regulation of ferritin H chain messenger RNA levels in the rat thyroids.</title>
        <authorList>
            <person name="Ursini M.V."/>
            <person name="de Franciscis V."/>
        </authorList>
    </citation>
    <scope>NUCLEOTIDE SEQUENCE [MRNA] OF 137-182</scope>
</reference>
<reference key="5">
    <citation type="journal article" date="1984" name="J. Biol. Chem.">
        <title>Conservation in rat liver of light and heavy subunit sequences of mammalian ferritin. Presence of unique octopeptide in the light subunit.</title>
        <authorList>
            <person name="Leibold E.A."/>
            <person name="Aziz N."/>
            <person name="Brown A.J.P."/>
            <person name="Munro H.N."/>
        </authorList>
    </citation>
    <scope>PROTEIN SEQUENCE OF 159-182</scope>
    <source>
        <tissue>Liver</tissue>
    </source>
</reference>
<protein>
    <recommendedName>
        <fullName>Ferritin heavy chain</fullName>
        <shortName>Ferritin H subunit</shortName>
        <ecNumber evidence="1">1.16.3.1</ecNumber>
    </recommendedName>
    <component>
        <recommendedName>
            <fullName>Ferritin heavy chain, N-terminally processed</fullName>
        </recommendedName>
    </component>
</protein>
<dbReference type="EC" id="1.16.3.1" evidence="1"/>
<dbReference type="EMBL" id="M18053">
    <property type="protein sequence ID" value="AAA41153.1"/>
    <property type="molecule type" value="Genomic_DNA"/>
</dbReference>
<dbReference type="EMBL" id="M18051">
    <property type="protein sequence ID" value="AAA41153.1"/>
    <property type="status" value="JOINED"/>
    <property type="molecule type" value="Genomic_DNA"/>
</dbReference>
<dbReference type="EMBL" id="M18052">
    <property type="protein sequence ID" value="AAA41153.1"/>
    <property type="status" value="JOINED"/>
    <property type="molecule type" value="Genomic_DNA"/>
</dbReference>
<dbReference type="EMBL" id="U58829">
    <property type="protein sequence ID" value="AAB39890.1"/>
    <property type="molecule type" value="mRNA"/>
</dbReference>
<dbReference type="EMBL" id="M29330">
    <property type="protein sequence ID" value="AAA42300.1"/>
    <property type="molecule type" value="mRNA"/>
</dbReference>
<dbReference type="PIR" id="A39884">
    <property type="entry name" value="A39884"/>
</dbReference>
<dbReference type="RefSeq" id="NP_036980.1">
    <property type="nucleotide sequence ID" value="NM_012848.2"/>
</dbReference>
<dbReference type="SMR" id="P19132"/>
<dbReference type="BioGRID" id="247358">
    <property type="interactions" value="1"/>
</dbReference>
<dbReference type="FunCoup" id="P19132">
    <property type="interactions" value="800"/>
</dbReference>
<dbReference type="IntAct" id="P19132">
    <property type="interactions" value="1"/>
</dbReference>
<dbReference type="STRING" id="10116.ENSRNOP00000037803"/>
<dbReference type="iPTMnet" id="P19132"/>
<dbReference type="PhosphoSitePlus" id="P19132"/>
<dbReference type="SwissPalm" id="P19132"/>
<dbReference type="jPOST" id="P19132"/>
<dbReference type="PaxDb" id="10116-ENSRNOP00000037803"/>
<dbReference type="DNASU" id="25319"/>
<dbReference type="GeneID" id="25319"/>
<dbReference type="KEGG" id="rno:25319"/>
<dbReference type="UCSC" id="RGD:2635">
    <property type="organism name" value="rat"/>
</dbReference>
<dbReference type="AGR" id="RGD:2635"/>
<dbReference type="CTD" id="2495"/>
<dbReference type="RGD" id="2635">
    <property type="gene designation" value="Fth1"/>
</dbReference>
<dbReference type="eggNOG" id="KOG2332">
    <property type="taxonomic scope" value="Eukaryota"/>
</dbReference>
<dbReference type="InParanoid" id="P19132"/>
<dbReference type="OrthoDB" id="49099at9989"/>
<dbReference type="Reactome" id="R-RNO-432722">
    <property type="pathway name" value="Golgi Associated Vesicle Biogenesis"/>
</dbReference>
<dbReference type="Reactome" id="R-RNO-6798695">
    <property type="pathway name" value="Neutrophil degranulation"/>
</dbReference>
<dbReference type="Reactome" id="R-RNO-917937">
    <property type="pathway name" value="Iron uptake and transport"/>
</dbReference>
<dbReference type="PRO" id="PR:P19132"/>
<dbReference type="Proteomes" id="UP000002494">
    <property type="component" value="Unplaced"/>
</dbReference>
<dbReference type="GO" id="GO:0044754">
    <property type="term" value="C:autolysosome"/>
    <property type="evidence" value="ECO:0000266"/>
    <property type="project" value="RGD"/>
</dbReference>
<dbReference type="GO" id="GO:0005776">
    <property type="term" value="C:autophagosome"/>
    <property type="evidence" value="ECO:0007669"/>
    <property type="project" value="UniProtKB-SubCell"/>
</dbReference>
<dbReference type="GO" id="GO:0005737">
    <property type="term" value="C:cytoplasm"/>
    <property type="evidence" value="ECO:0000318"/>
    <property type="project" value="GO_Central"/>
</dbReference>
<dbReference type="GO" id="GO:0031410">
    <property type="term" value="C:cytoplasmic vesicle"/>
    <property type="evidence" value="ECO:0007669"/>
    <property type="project" value="UniProtKB-KW"/>
</dbReference>
<dbReference type="GO" id="GO:0005829">
    <property type="term" value="C:cytosol"/>
    <property type="evidence" value="ECO:0000266"/>
    <property type="project" value="RGD"/>
</dbReference>
<dbReference type="GO" id="GO:0016020">
    <property type="term" value="C:membrane"/>
    <property type="evidence" value="ECO:0000266"/>
    <property type="project" value="RGD"/>
</dbReference>
<dbReference type="GO" id="GO:0008199">
    <property type="term" value="F:ferric iron binding"/>
    <property type="evidence" value="ECO:0000318"/>
    <property type="project" value="GO_Central"/>
</dbReference>
<dbReference type="GO" id="GO:0008198">
    <property type="term" value="F:ferrous iron binding"/>
    <property type="evidence" value="ECO:0000266"/>
    <property type="project" value="RGD"/>
</dbReference>
<dbReference type="GO" id="GO:0004322">
    <property type="term" value="F:ferroxidase activity"/>
    <property type="evidence" value="ECO:0000266"/>
    <property type="project" value="RGD"/>
</dbReference>
<dbReference type="GO" id="GO:0042802">
    <property type="term" value="F:identical protein binding"/>
    <property type="evidence" value="ECO:0000266"/>
    <property type="project" value="RGD"/>
</dbReference>
<dbReference type="GO" id="GO:0005506">
    <property type="term" value="F:iron ion binding"/>
    <property type="evidence" value="ECO:0000266"/>
    <property type="project" value="RGD"/>
</dbReference>
<dbReference type="GO" id="GO:0140315">
    <property type="term" value="F:iron ion sequestering activity"/>
    <property type="evidence" value="ECO:0000266"/>
    <property type="project" value="RGD"/>
</dbReference>
<dbReference type="GO" id="GO:0006955">
    <property type="term" value="P:immune response"/>
    <property type="evidence" value="ECO:0000250"/>
    <property type="project" value="UniProtKB"/>
</dbReference>
<dbReference type="GO" id="GO:0006879">
    <property type="term" value="P:intracellular iron ion homeostasis"/>
    <property type="evidence" value="ECO:0007669"/>
    <property type="project" value="UniProtKB-KW"/>
</dbReference>
<dbReference type="GO" id="GO:0006826">
    <property type="term" value="P:iron ion transport"/>
    <property type="evidence" value="ECO:0000266"/>
    <property type="project" value="RGD"/>
</dbReference>
<dbReference type="GO" id="GO:0008285">
    <property type="term" value="P:negative regulation of cell population proliferation"/>
    <property type="evidence" value="ECO:0000250"/>
    <property type="project" value="UniProtKB"/>
</dbReference>
<dbReference type="GO" id="GO:0110076">
    <property type="term" value="P:negative regulation of ferroptosis"/>
    <property type="evidence" value="ECO:0000250"/>
    <property type="project" value="UniProtKB"/>
</dbReference>
<dbReference type="GO" id="GO:0048147">
    <property type="term" value="P:negative regulation of fibroblast proliferation"/>
    <property type="evidence" value="ECO:0000314"/>
    <property type="project" value="UniProtKB"/>
</dbReference>
<dbReference type="CDD" id="cd01056">
    <property type="entry name" value="Euk_Ferritin"/>
    <property type="match status" value="1"/>
</dbReference>
<dbReference type="FunFam" id="1.20.1260.10:FF:000024">
    <property type="entry name" value="Ferritin heavy chain"/>
    <property type="match status" value="1"/>
</dbReference>
<dbReference type="Gene3D" id="1.20.1260.10">
    <property type="match status" value="1"/>
</dbReference>
<dbReference type="InterPro" id="IPR001519">
    <property type="entry name" value="Ferritin"/>
</dbReference>
<dbReference type="InterPro" id="IPR012347">
    <property type="entry name" value="Ferritin-like"/>
</dbReference>
<dbReference type="InterPro" id="IPR009040">
    <property type="entry name" value="Ferritin-like_diiron"/>
</dbReference>
<dbReference type="InterPro" id="IPR009078">
    <property type="entry name" value="Ferritin-like_SF"/>
</dbReference>
<dbReference type="InterPro" id="IPR014034">
    <property type="entry name" value="Ferritin_CS"/>
</dbReference>
<dbReference type="InterPro" id="IPR008331">
    <property type="entry name" value="Ferritin_DPS_dom"/>
</dbReference>
<dbReference type="PANTHER" id="PTHR11431">
    <property type="entry name" value="FERRITIN"/>
    <property type="match status" value="1"/>
</dbReference>
<dbReference type="PANTHER" id="PTHR11431:SF37">
    <property type="entry name" value="FERRITIN HEAVY CHAIN"/>
    <property type="match status" value="1"/>
</dbReference>
<dbReference type="Pfam" id="PF00210">
    <property type="entry name" value="Ferritin"/>
    <property type="match status" value="1"/>
</dbReference>
<dbReference type="SUPFAM" id="SSF47240">
    <property type="entry name" value="Ferritin-like"/>
    <property type="match status" value="1"/>
</dbReference>
<dbReference type="PROSITE" id="PS00540">
    <property type="entry name" value="FERRITIN_1"/>
    <property type="match status" value="1"/>
</dbReference>
<dbReference type="PROSITE" id="PS00204">
    <property type="entry name" value="FERRITIN_2"/>
    <property type="match status" value="1"/>
</dbReference>
<dbReference type="PROSITE" id="PS50905">
    <property type="entry name" value="FERRITIN_LIKE"/>
    <property type="match status" value="1"/>
</dbReference>
<comment type="function">
    <text evidence="1 2">Stores iron in a soluble, non-toxic, readily available form (By similarity). Important for iron homeostasis (By similarity). Has ferroxidase activity (By similarity). Iron is taken up in the ferrous form and deposited as ferric hydroxides after oxidation (By similarity). Also plays a role in delivery of iron to cells (By similarity). Mediates iron uptake in capsule cells of the developing kidney (By similarity). Delivery to lysosomes is mediated by the cargo receptor NCOA4 for autophagic degradation and release of iron (By similarity).</text>
</comment>
<comment type="catalytic activity">
    <reaction evidence="1">
        <text>4 Fe(2+) + O2 + 4 H(+) = 4 Fe(3+) + 2 H2O</text>
        <dbReference type="Rhea" id="RHEA:11148"/>
        <dbReference type="ChEBI" id="CHEBI:15377"/>
        <dbReference type="ChEBI" id="CHEBI:15378"/>
        <dbReference type="ChEBI" id="CHEBI:15379"/>
        <dbReference type="ChEBI" id="CHEBI:29033"/>
        <dbReference type="ChEBI" id="CHEBI:29034"/>
        <dbReference type="EC" id="1.16.3.1"/>
    </reaction>
</comment>
<comment type="subunit">
    <text evidence="1 2">Oligomer of 24 subunits. There are two types of subunits: L (light) chain and H (heavy) chain. The major chain can be light or heavy, depending on the species and tissue type. The functional molecule forms a roughly spherical shell with a diameter of 12 nm and contains a central cavity into which the insoluble mineral iron core is deposited. Interacts with NCOA4; NCOA4 promotes targeting of the iron-binding ferritin complex to autolysosomes following starvation or iron depletion (By similarity).</text>
</comment>
<comment type="subcellular location">
    <subcellularLocation>
        <location evidence="3">Cytoplasm</location>
    </subcellularLocation>
    <subcellularLocation>
        <location evidence="1">Lysosome</location>
    </subcellularLocation>
    <subcellularLocation>
        <location evidence="1">Cytoplasmic vesicle</location>
        <location evidence="1">Autophagosome</location>
    </subcellularLocation>
</comment>
<comment type="similarity">
    <text evidence="5">Belongs to the ferritin family.</text>
</comment>
<proteinExistence type="evidence at protein level"/>
<organism>
    <name type="scientific">Rattus norvegicus</name>
    <name type="common">Rat</name>
    <dbReference type="NCBI Taxonomy" id="10116"/>
    <lineage>
        <taxon>Eukaryota</taxon>
        <taxon>Metazoa</taxon>
        <taxon>Chordata</taxon>
        <taxon>Craniata</taxon>
        <taxon>Vertebrata</taxon>
        <taxon>Euteleostomi</taxon>
        <taxon>Mammalia</taxon>
        <taxon>Eutheria</taxon>
        <taxon>Euarchontoglires</taxon>
        <taxon>Glires</taxon>
        <taxon>Rodentia</taxon>
        <taxon>Myomorpha</taxon>
        <taxon>Muroidea</taxon>
        <taxon>Muridae</taxon>
        <taxon>Murinae</taxon>
        <taxon>Rattus</taxon>
    </lineage>
</organism>
<evidence type="ECO:0000250" key="1">
    <source>
        <dbReference type="UniProtKB" id="P02794"/>
    </source>
</evidence>
<evidence type="ECO:0000250" key="2">
    <source>
        <dbReference type="UniProtKB" id="P09528"/>
    </source>
</evidence>
<evidence type="ECO:0000250" key="3">
    <source>
        <dbReference type="UniProtKB" id="P19130"/>
    </source>
</evidence>
<evidence type="ECO:0000255" key="4">
    <source>
        <dbReference type="PROSITE-ProRule" id="PRU00085"/>
    </source>
</evidence>
<evidence type="ECO:0000305" key="5"/>
<name>FRIH_RAT</name>
<accession>P19132</accession>
<feature type="chain" id="PRO_0000424476" description="Ferritin heavy chain">
    <location>
        <begin position="1"/>
        <end position="182"/>
    </location>
</feature>
<feature type="initiator methionine" description="Removed; alternate" evidence="1">
    <location>
        <position position="1"/>
    </location>
</feature>
<feature type="chain" id="PRO_0000201053" description="Ferritin heavy chain, N-terminally processed">
    <location>
        <begin position="2"/>
        <end position="182"/>
    </location>
</feature>
<feature type="domain" description="Ferritin-like diiron" evidence="4">
    <location>
        <begin position="11"/>
        <end position="160"/>
    </location>
</feature>
<feature type="binding site" evidence="4">
    <location>
        <position position="28"/>
    </location>
    <ligand>
        <name>Fe cation</name>
        <dbReference type="ChEBI" id="CHEBI:24875"/>
        <label>1</label>
    </ligand>
</feature>
<feature type="binding site" evidence="4">
    <location>
        <position position="63"/>
    </location>
    <ligand>
        <name>Fe cation</name>
        <dbReference type="ChEBI" id="CHEBI:24875"/>
        <label>1</label>
    </ligand>
</feature>
<feature type="binding site" evidence="4">
    <location>
        <position position="63"/>
    </location>
    <ligand>
        <name>Fe cation</name>
        <dbReference type="ChEBI" id="CHEBI:24875"/>
        <label>2</label>
    </ligand>
</feature>
<feature type="binding site" evidence="4">
    <location>
        <position position="66"/>
    </location>
    <ligand>
        <name>Fe cation</name>
        <dbReference type="ChEBI" id="CHEBI:24875"/>
        <label>1</label>
    </ligand>
</feature>
<feature type="binding site" evidence="4">
    <location>
        <position position="108"/>
    </location>
    <ligand>
        <name>Fe cation</name>
        <dbReference type="ChEBI" id="CHEBI:24875"/>
        <label>2</label>
    </ligand>
</feature>
<feature type="binding site" evidence="4">
    <location>
        <position position="142"/>
    </location>
    <ligand>
        <name>Fe cation</name>
        <dbReference type="ChEBI" id="CHEBI:24875"/>
        <label>2</label>
    </ligand>
</feature>
<feature type="modified residue" description="N-acetylmethionine" evidence="1">
    <location>
        <position position="1"/>
    </location>
</feature>
<feature type="modified residue" description="N-acetylthreonine; in Ferritin heavy chain, N-terminally processed" evidence="1">
    <location>
        <position position="2"/>
    </location>
</feature>
<feature type="sequence conflict" description="In Ref. 2; AAB39890." evidence="5" ref="2">
    <original>R</original>
    <variation>E</variation>
    <location>
        <position position="102"/>
    </location>
</feature>
<feature type="sequence conflict" description="In Ref. 5; AA sequence." evidence="5" ref="5">
    <original>S</original>
    <variation>E</variation>
    <location>
        <position position="182"/>
    </location>
</feature>
<sequence>MTTASPSQVRQNYHQDSEAAINRQINLELYASYVYLSMSCYFDRDDVALKNFAKYFLHQSHEEREHAEKLMKLQNQRGGRIFLQDIKKPDRDDWESGLNAMRCALHLEKSVNQSLLELHKLATDKNDPHLCDFIETHYLNEQVKSIKELGDHVTNLRKMGAPESGMAEYLFDKHTLGHGDES</sequence>
<gene>
    <name type="primary">Fth1</name>
    <name type="synonym">Fth</name>
</gene>
<keyword id="KW-0007">Acetylation</keyword>
<keyword id="KW-0963">Cytoplasm</keyword>
<keyword id="KW-0968">Cytoplasmic vesicle</keyword>
<keyword id="KW-0903">Direct protein sequencing</keyword>
<keyword id="KW-0408">Iron</keyword>
<keyword id="KW-0409">Iron storage</keyword>
<keyword id="KW-0458">Lysosome</keyword>
<keyword id="KW-0479">Metal-binding</keyword>
<keyword id="KW-0560">Oxidoreductase</keyword>
<keyword id="KW-1185">Reference proteome</keyword>